<name>CLPQ_BACVZ</name>
<comment type="function">
    <text evidence="1">Protease subunit of a proteasome-like degradation complex.</text>
</comment>
<comment type="subunit">
    <text evidence="1">A double ring-shaped homohexamer of ClpQ is capped on each side by a ring-shaped ClpY homohexamer. The assembly of the ClpQ/ClpY complex is dependent on binding of ATP (By similarity).</text>
</comment>
<comment type="subcellular location">
    <subcellularLocation>
        <location evidence="1">Cytoplasm</location>
    </subcellularLocation>
</comment>
<comment type="similarity">
    <text evidence="2">Belongs to the peptidase T1B family. HslV subfamily.</text>
</comment>
<sequence>MSSFHATTIFAVQHNGKSAMSGDGQVTFGQAVVMKHTARKVRKLFNGKVLAGFAGSVADAFTLFEMFEAKLEEYNGNLKRASVELAKEWRSDKVLRKLEAMLIVMNQDTLLLVSGTGEVIEPDDGILAIGSGGNYALSAGRALKTYAGENLSAKDIAKAALKIAGEICVYTNDQIILEELE</sequence>
<reference key="1">
    <citation type="journal article" date="2007" name="Nat. Biotechnol.">
        <title>Comparative analysis of the complete genome sequence of the plant growth-promoting bacterium Bacillus amyloliquefaciens FZB42.</title>
        <authorList>
            <person name="Chen X.H."/>
            <person name="Koumoutsi A."/>
            <person name="Scholz R."/>
            <person name="Eisenreich A."/>
            <person name="Schneider K."/>
            <person name="Heinemeyer I."/>
            <person name="Morgenstern B."/>
            <person name="Voss B."/>
            <person name="Hess W.R."/>
            <person name="Reva O."/>
            <person name="Junge H."/>
            <person name="Voigt B."/>
            <person name="Jungblut P.R."/>
            <person name="Vater J."/>
            <person name="Suessmuth R."/>
            <person name="Liesegang H."/>
            <person name="Strittmatter A."/>
            <person name="Gottschalk G."/>
            <person name="Borriss R."/>
        </authorList>
    </citation>
    <scope>NUCLEOTIDE SEQUENCE [LARGE SCALE GENOMIC DNA]</scope>
    <source>
        <strain>DSM 23117 / BGSC 10A6 / LMG 26770 / FZB42</strain>
    </source>
</reference>
<evidence type="ECO:0000250" key="1"/>
<evidence type="ECO:0000305" key="2"/>
<protein>
    <recommendedName>
        <fullName>ATP-dependent protease subunit ClpQ</fullName>
        <ecNumber>3.4.21.-</ecNumber>
    </recommendedName>
</protein>
<accession>A7Z4N5</accession>
<feature type="initiator methionine" description="Removed" evidence="1">
    <location>
        <position position="1"/>
    </location>
</feature>
<feature type="chain" id="PRO_1000012577" description="ATP-dependent protease subunit ClpQ">
    <location>
        <begin position="2"/>
        <end position="181"/>
    </location>
</feature>
<feature type="active site" evidence="1">
    <location>
        <position position="2"/>
    </location>
</feature>
<feature type="binding site" evidence="1">
    <location>
        <position position="165"/>
    </location>
    <ligand>
        <name>Na(+)</name>
        <dbReference type="ChEBI" id="CHEBI:29101"/>
    </ligand>
</feature>
<feature type="binding site" evidence="1">
    <location>
        <position position="168"/>
    </location>
    <ligand>
        <name>Na(+)</name>
        <dbReference type="ChEBI" id="CHEBI:29101"/>
    </ligand>
</feature>
<feature type="binding site" evidence="1">
    <location>
        <position position="171"/>
    </location>
    <ligand>
        <name>Na(+)</name>
        <dbReference type="ChEBI" id="CHEBI:29101"/>
    </ligand>
</feature>
<proteinExistence type="inferred from homology"/>
<keyword id="KW-0963">Cytoplasm</keyword>
<keyword id="KW-0378">Hydrolase</keyword>
<keyword id="KW-0479">Metal-binding</keyword>
<keyword id="KW-0645">Protease</keyword>
<keyword id="KW-0720">Serine protease</keyword>
<keyword id="KW-0915">Sodium</keyword>
<gene>
    <name type="primary">clpQ</name>
    <name type="synonym">hslV</name>
    <name type="ordered locus">RBAM_015980</name>
</gene>
<dbReference type="EC" id="3.4.21.-"/>
<dbReference type="EMBL" id="CP000560">
    <property type="protein sequence ID" value="ABS73961.1"/>
    <property type="molecule type" value="Genomic_DNA"/>
</dbReference>
<dbReference type="RefSeq" id="WP_003154267.1">
    <property type="nucleotide sequence ID" value="NC_009725.2"/>
</dbReference>
<dbReference type="SMR" id="A7Z4N5"/>
<dbReference type="MEROPS" id="T01.007"/>
<dbReference type="GeneID" id="93080731"/>
<dbReference type="KEGG" id="bay:RBAM_015980"/>
<dbReference type="HOGENOM" id="CLU_093872_1_1_9"/>
<dbReference type="Proteomes" id="UP000001120">
    <property type="component" value="Chromosome"/>
</dbReference>
<dbReference type="GO" id="GO:0009376">
    <property type="term" value="C:HslUV protease complex"/>
    <property type="evidence" value="ECO:0007669"/>
    <property type="project" value="UniProtKB-UniRule"/>
</dbReference>
<dbReference type="GO" id="GO:0005839">
    <property type="term" value="C:proteasome core complex"/>
    <property type="evidence" value="ECO:0007669"/>
    <property type="project" value="InterPro"/>
</dbReference>
<dbReference type="GO" id="GO:0046872">
    <property type="term" value="F:metal ion binding"/>
    <property type="evidence" value="ECO:0007669"/>
    <property type="project" value="UniProtKB-KW"/>
</dbReference>
<dbReference type="GO" id="GO:0008236">
    <property type="term" value="F:serine-type peptidase activity"/>
    <property type="evidence" value="ECO:0007669"/>
    <property type="project" value="UniProtKB-KW"/>
</dbReference>
<dbReference type="GO" id="GO:0004298">
    <property type="term" value="F:threonine-type endopeptidase activity"/>
    <property type="evidence" value="ECO:0007669"/>
    <property type="project" value="InterPro"/>
</dbReference>
<dbReference type="GO" id="GO:0051603">
    <property type="term" value="P:proteolysis involved in protein catabolic process"/>
    <property type="evidence" value="ECO:0007669"/>
    <property type="project" value="InterPro"/>
</dbReference>
<dbReference type="CDD" id="cd01913">
    <property type="entry name" value="protease_HslV"/>
    <property type="match status" value="1"/>
</dbReference>
<dbReference type="Gene3D" id="3.60.20.10">
    <property type="entry name" value="Glutamine Phosphoribosylpyrophosphate, subunit 1, domain 1"/>
    <property type="match status" value="1"/>
</dbReference>
<dbReference type="HAMAP" id="MF_00248">
    <property type="entry name" value="HslV"/>
    <property type="match status" value="1"/>
</dbReference>
<dbReference type="InterPro" id="IPR022281">
    <property type="entry name" value="ATP-dep_Prtase_HsIV_su"/>
</dbReference>
<dbReference type="InterPro" id="IPR029055">
    <property type="entry name" value="Ntn_hydrolases_N"/>
</dbReference>
<dbReference type="InterPro" id="IPR001353">
    <property type="entry name" value="Proteasome_sua/b"/>
</dbReference>
<dbReference type="InterPro" id="IPR023333">
    <property type="entry name" value="Proteasome_suB-type"/>
</dbReference>
<dbReference type="NCBIfam" id="TIGR03692">
    <property type="entry name" value="ATP_dep_HslV"/>
    <property type="match status" value="1"/>
</dbReference>
<dbReference type="NCBIfam" id="NF003964">
    <property type="entry name" value="PRK05456.1"/>
    <property type="match status" value="1"/>
</dbReference>
<dbReference type="PANTHER" id="PTHR32194:SF0">
    <property type="entry name" value="ATP-DEPENDENT PROTEASE SUBUNIT HSLV"/>
    <property type="match status" value="1"/>
</dbReference>
<dbReference type="PANTHER" id="PTHR32194">
    <property type="entry name" value="METALLOPROTEASE TLDD"/>
    <property type="match status" value="1"/>
</dbReference>
<dbReference type="Pfam" id="PF00227">
    <property type="entry name" value="Proteasome"/>
    <property type="match status" value="1"/>
</dbReference>
<dbReference type="PIRSF" id="PIRSF039093">
    <property type="entry name" value="HslV"/>
    <property type="match status" value="1"/>
</dbReference>
<dbReference type="SUPFAM" id="SSF56235">
    <property type="entry name" value="N-terminal nucleophile aminohydrolases (Ntn hydrolases)"/>
    <property type="match status" value="1"/>
</dbReference>
<dbReference type="PROSITE" id="PS51476">
    <property type="entry name" value="PROTEASOME_BETA_2"/>
    <property type="match status" value="1"/>
</dbReference>
<organism>
    <name type="scientific">Bacillus velezensis (strain DSM 23117 / BGSC 10A6 / LMG 26770 / FZB42)</name>
    <name type="common">Bacillus amyloliquefaciens subsp. plantarum</name>
    <dbReference type="NCBI Taxonomy" id="326423"/>
    <lineage>
        <taxon>Bacteria</taxon>
        <taxon>Bacillati</taxon>
        <taxon>Bacillota</taxon>
        <taxon>Bacilli</taxon>
        <taxon>Bacillales</taxon>
        <taxon>Bacillaceae</taxon>
        <taxon>Bacillus</taxon>
        <taxon>Bacillus amyloliquefaciens group</taxon>
    </lineage>
</organism>